<evidence type="ECO:0000250" key="1">
    <source>
        <dbReference type="UniProtKB" id="P06710"/>
    </source>
</evidence>
<evidence type="ECO:0000255" key="2"/>
<evidence type="ECO:0000256" key="3">
    <source>
        <dbReference type="SAM" id="MobiDB-lite"/>
    </source>
</evidence>
<evidence type="ECO:0000269" key="4">
    <source>
    </source>
</evidence>
<evidence type="ECO:0000269" key="5">
    <source>
    </source>
</evidence>
<evidence type="ECO:0000269" key="6">
    <source>
    </source>
</evidence>
<evidence type="ECO:0000269" key="7">
    <source>
    </source>
</evidence>
<evidence type="ECO:0000269" key="8">
    <source>
    </source>
</evidence>
<evidence type="ECO:0000269" key="9">
    <source>
    </source>
</evidence>
<evidence type="ECO:0000269" key="10">
    <source>
    </source>
</evidence>
<evidence type="ECO:0000305" key="11"/>
<accession>O64728</accession>
<accession>Q9LKQ4</accession>
<feature type="chain" id="PRO_0000422976" description="Protein STICHEL">
    <location>
        <begin position="1"/>
        <end position="1218"/>
    </location>
</feature>
<feature type="region of interest" description="Disordered" evidence="3">
    <location>
        <begin position="24"/>
        <end position="136"/>
    </location>
</feature>
<feature type="region of interest" description="Disordered" evidence="3">
    <location>
        <begin position="802"/>
        <end position="828"/>
    </location>
</feature>
<feature type="coiled-coil region" evidence="2">
    <location>
        <begin position="762"/>
        <end position="788"/>
    </location>
</feature>
<feature type="short sequence motif" description="Bipartite nuclear localization signal" evidence="2">
    <location>
        <begin position="163"/>
        <end position="180"/>
    </location>
</feature>
<feature type="short sequence motif" description="PEST 1">
    <location>
        <begin position="273"/>
        <end position="304"/>
    </location>
</feature>
<feature type="short sequence motif" description="PEST 2">
    <location>
        <begin position="425"/>
        <end position="449"/>
    </location>
</feature>
<feature type="short sequence motif" description="Bipartite nuclear localization signal" evidence="2">
    <location>
        <begin position="1178"/>
        <end position="1195"/>
    </location>
</feature>
<feature type="short sequence motif" description="Bipartite nuclear localization signal" evidence="2">
    <location>
        <begin position="1196"/>
        <end position="1213"/>
    </location>
</feature>
<feature type="compositionally biased region" description="Polar residues" evidence="3">
    <location>
        <begin position="32"/>
        <end position="46"/>
    </location>
</feature>
<feature type="compositionally biased region" description="Polar residues" evidence="3">
    <location>
        <begin position="54"/>
        <end position="73"/>
    </location>
</feature>
<feature type="compositionally biased region" description="Polar residues" evidence="3">
    <location>
        <begin position="86"/>
        <end position="95"/>
    </location>
</feature>
<feature type="compositionally biased region" description="Polar residues" evidence="3">
    <location>
        <begin position="804"/>
        <end position="819"/>
    </location>
</feature>
<feature type="binding site" evidence="2">
    <location>
        <begin position="490"/>
        <end position="497"/>
    </location>
    <ligand>
        <name>ATP</name>
        <dbReference type="ChEBI" id="CHEBI:30616"/>
    </ligand>
</feature>
<feature type="binding site" evidence="1">
    <location>
        <position position="509"/>
    </location>
    <ligand>
        <name>Zn(2+)</name>
        <dbReference type="ChEBI" id="CHEBI:29105"/>
    </ligand>
</feature>
<feature type="binding site" evidence="1">
    <location>
        <position position="518"/>
    </location>
    <ligand>
        <name>Zn(2+)</name>
        <dbReference type="ChEBI" id="CHEBI:29105"/>
    </ligand>
</feature>
<feature type="binding site" evidence="1">
    <location>
        <position position="521"/>
    </location>
    <ligand>
        <name>Zn(2+)</name>
        <dbReference type="ChEBI" id="CHEBI:29105"/>
    </ligand>
</feature>
<feature type="binding site" evidence="1">
    <location>
        <position position="524"/>
    </location>
    <ligand>
        <name>Zn(2+)</name>
        <dbReference type="ChEBI" id="CHEBI:29105"/>
    </ligand>
</feature>
<organism>
    <name type="scientific">Arabidopsis thaliana</name>
    <name type="common">Mouse-ear cress</name>
    <dbReference type="NCBI Taxonomy" id="3702"/>
    <lineage>
        <taxon>Eukaryota</taxon>
        <taxon>Viridiplantae</taxon>
        <taxon>Streptophyta</taxon>
        <taxon>Embryophyta</taxon>
        <taxon>Tracheophyta</taxon>
        <taxon>Spermatophyta</taxon>
        <taxon>Magnoliopsida</taxon>
        <taxon>eudicotyledons</taxon>
        <taxon>Gunneridae</taxon>
        <taxon>Pentapetalae</taxon>
        <taxon>rosids</taxon>
        <taxon>malvids</taxon>
        <taxon>Brassicales</taxon>
        <taxon>Brassicaceae</taxon>
        <taxon>Camelineae</taxon>
        <taxon>Arabidopsis</taxon>
    </lineage>
</organism>
<reference key="1">
    <citation type="submission" date="2000-05" db="EMBL/GenBank/DDBJ databases">
        <title>The Arabidopsis STI gene is a member of the replication factor C-like gene family.</title>
        <authorList>
            <person name="Marks M.D."/>
            <person name="Prigge M."/>
            <person name="Shi H."/>
        </authorList>
    </citation>
    <scope>NUCLEOTIDE SEQUENCE [MRNA]</scope>
    <source>
        <strain>cv. Columbia</strain>
    </source>
</reference>
<reference key="2">
    <citation type="journal article" date="1999" name="Nature">
        <title>Sequence and analysis of chromosome 2 of the plant Arabidopsis thaliana.</title>
        <authorList>
            <person name="Lin X."/>
            <person name="Kaul S."/>
            <person name="Rounsley S.D."/>
            <person name="Shea T.P."/>
            <person name="Benito M.-I."/>
            <person name="Town C.D."/>
            <person name="Fujii C.Y."/>
            <person name="Mason T.M."/>
            <person name="Bowman C.L."/>
            <person name="Barnstead M.E."/>
            <person name="Feldblyum T.V."/>
            <person name="Buell C.R."/>
            <person name="Ketchum K.A."/>
            <person name="Lee J.J."/>
            <person name="Ronning C.M."/>
            <person name="Koo H.L."/>
            <person name="Moffat K.S."/>
            <person name="Cronin L.A."/>
            <person name="Shen M."/>
            <person name="Pai G."/>
            <person name="Van Aken S."/>
            <person name="Umayam L."/>
            <person name="Tallon L.J."/>
            <person name="Gill J.E."/>
            <person name="Adams M.D."/>
            <person name="Carrera A.J."/>
            <person name="Creasy T.H."/>
            <person name="Goodman H.M."/>
            <person name="Somerville C.R."/>
            <person name="Copenhaver G.P."/>
            <person name="Preuss D."/>
            <person name="Nierman W.C."/>
            <person name="White O."/>
            <person name="Eisen J.A."/>
            <person name="Salzberg S.L."/>
            <person name="Fraser C.M."/>
            <person name="Venter J.C."/>
        </authorList>
    </citation>
    <scope>NUCLEOTIDE SEQUENCE [LARGE SCALE GENOMIC DNA]</scope>
    <source>
        <strain>cv. Columbia</strain>
    </source>
</reference>
<reference key="3">
    <citation type="journal article" date="2017" name="Plant J.">
        <title>Araport11: a complete reannotation of the Arabidopsis thaliana reference genome.</title>
        <authorList>
            <person name="Cheng C.Y."/>
            <person name="Krishnakumar V."/>
            <person name="Chan A.P."/>
            <person name="Thibaud-Nissen F."/>
            <person name="Schobel S."/>
            <person name="Town C.D."/>
        </authorList>
    </citation>
    <scope>GENOME REANNOTATION</scope>
    <source>
        <strain>cv. Columbia</strain>
    </source>
</reference>
<reference key="4">
    <citation type="journal article" date="1994" name="Cell">
        <title>Genetic dissection of trichome cell development in Arabidopsis.</title>
        <authorList>
            <person name="Huelskamp M."/>
            <person name="Misra S."/>
            <person name="Juergens G."/>
        </authorList>
    </citation>
    <scope>DISRUPTION PHENOTYPE</scope>
    <scope>MUTANT STICHEL</scope>
</reference>
<reference key="5">
    <citation type="journal article" date="1997" name="Development">
        <title>Cell morphogenesis of trichomes in Arabidopsis: differential control of primary and secondary branching by branch initiation regulators and cell growth.</title>
        <authorList>
            <person name="Folkers U."/>
            <person name="Berger J."/>
            <person name="Huelskamp M."/>
        </authorList>
    </citation>
    <scope>FUNCTION</scope>
</reference>
<reference key="6">
    <citation type="journal article" date="1999" name="Development">
        <title>Genetic control of trichome branch number in Arabidopsis: the roles of the FURCA loci.</title>
        <authorList>
            <person name="Luo D."/>
            <person name="Oppenheimer D.G."/>
        </authorList>
    </citation>
    <scope>FUNCTION</scope>
</reference>
<reference key="7">
    <citation type="journal article" date="2003" name="Plant Physiol.">
        <title>The Arabidopsis STICHEL gene is a regulator of trichome branch number and encodes a novel protein.</title>
        <authorList>
            <person name="Ilgenfritz H."/>
            <person name="Bouyer D."/>
            <person name="Schnittger A."/>
            <person name="Mathur J."/>
            <person name="Kirik V."/>
            <person name="Schwab B."/>
            <person name="Chua N.H."/>
            <person name="Juergens G."/>
            <person name="Huelskamp M."/>
        </authorList>
    </citation>
    <scope>GENE FAMILY</scope>
    <scope>PEST MOTIF</scope>
    <scope>NUCLEAR LOCALIZATION SIGNAL</scope>
    <scope>DISRUPTION PHENOTYPE</scope>
    <scope>FUNCTION</scope>
    <scope>TISSUE SPECIFICITY</scope>
</reference>
<reference key="8">
    <citation type="journal article" date="2008" name="BMC Plant Biol.">
        <title>Control of trichome branching by chromatin assembly factor-1.</title>
        <authorList>
            <person name="Exner V."/>
            <person name="Gruissem W."/>
            <person name="Hennig L."/>
        </authorList>
    </citation>
    <scope>FUNCTION</scope>
</reference>
<reference key="9">
    <citation type="journal article" date="2011" name="Development">
        <title>BRANCHLESS TRICHOMES links cell shape and cell cycle control in Arabidopsis trichomes.</title>
        <authorList>
            <person name="Kasili R."/>
            <person name="Huang C.C."/>
            <person name="Walker J.D."/>
            <person name="Simmons L.A."/>
            <person name="Zhou J."/>
            <person name="Faulk C."/>
            <person name="Huelskamp M."/>
            <person name="Larkin J.C."/>
        </authorList>
    </citation>
    <scope>INTERACTION WITH BLT</scope>
</reference>
<reference key="10">
    <citation type="journal article" date="2012" name="Plant Cell Physiol.">
        <title>GLABROUS INFLORESCENCE STEMS (GIS) is required for trichome branching through gibberellic acid signaling in Arabidopsis.</title>
        <authorList>
            <person name="An L."/>
            <person name="Zhou Z."/>
            <person name="Su S."/>
            <person name="Yan A."/>
            <person name="Gan Y."/>
        </authorList>
    </citation>
    <scope>INDUCTION BY GA3</scope>
    <scope>FUNCTION</scope>
</reference>
<dbReference type="EMBL" id="AF264023">
    <property type="protein sequence ID" value="AAF82285.1"/>
    <property type="molecule type" value="mRNA"/>
</dbReference>
<dbReference type="EMBL" id="AC004136">
    <property type="protein sequence ID" value="AAC18938.2"/>
    <property type="molecule type" value="Genomic_DNA"/>
</dbReference>
<dbReference type="EMBL" id="CP002685">
    <property type="protein sequence ID" value="AEC05585.1"/>
    <property type="molecule type" value="Genomic_DNA"/>
</dbReference>
<dbReference type="EMBL" id="CP002685">
    <property type="protein sequence ID" value="ANM62557.1"/>
    <property type="molecule type" value="Genomic_DNA"/>
</dbReference>
<dbReference type="PIR" id="T00615">
    <property type="entry name" value="T00615"/>
</dbReference>
<dbReference type="RefSeq" id="NP_001324706.1">
    <property type="nucleotide sequence ID" value="NM_001335120.1"/>
</dbReference>
<dbReference type="RefSeq" id="NP_565285.1">
    <property type="nucleotide sequence ID" value="NM_126303.3"/>
</dbReference>
<dbReference type="SMR" id="O64728"/>
<dbReference type="BioGRID" id="180">
    <property type="interactions" value="3"/>
</dbReference>
<dbReference type="FunCoup" id="O64728">
    <property type="interactions" value="1533"/>
</dbReference>
<dbReference type="IntAct" id="O64728">
    <property type="interactions" value="2"/>
</dbReference>
<dbReference type="STRING" id="3702.O64728"/>
<dbReference type="iPTMnet" id="O64728"/>
<dbReference type="PaxDb" id="3702-AT2G02480.1"/>
<dbReference type="ProteomicsDB" id="228423"/>
<dbReference type="EnsemblPlants" id="AT2G02480.1">
    <property type="protein sequence ID" value="AT2G02480.1"/>
    <property type="gene ID" value="AT2G02480"/>
</dbReference>
<dbReference type="EnsemblPlants" id="AT2G02480.2">
    <property type="protein sequence ID" value="AT2G02480.2"/>
    <property type="gene ID" value="AT2G02480"/>
</dbReference>
<dbReference type="GeneID" id="814777"/>
<dbReference type="Gramene" id="AT2G02480.1">
    <property type="protein sequence ID" value="AT2G02480.1"/>
    <property type="gene ID" value="AT2G02480"/>
</dbReference>
<dbReference type="Gramene" id="AT2G02480.2">
    <property type="protein sequence ID" value="AT2G02480.2"/>
    <property type="gene ID" value="AT2G02480"/>
</dbReference>
<dbReference type="KEGG" id="ath:AT2G02480"/>
<dbReference type="Araport" id="AT2G02480"/>
<dbReference type="TAIR" id="AT2G02480">
    <property type="gene designation" value="STI"/>
</dbReference>
<dbReference type="eggNOG" id="KOG0989">
    <property type="taxonomic scope" value="Eukaryota"/>
</dbReference>
<dbReference type="HOGENOM" id="CLU_009072_0_0_1"/>
<dbReference type="InParanoid" id="O64728"/>
<dbReference type="OMA" id="QWEDELN"/>
<dbReference type="PhylomeDB" id="O64728"/>
<dbReference type="PRO" id="PR:O64728"/>
<dbReference type="Proteomes" id="UP000006548">
    <property type="component" value="Chromosome 2"/>
</dbReference>
<dbReference type="ExpressionAtlas" id="O64728">
    <property type="expression patterns" value="baseline and differential"/>
</dbReference>
<dbReference type="GO" id="GO:0009360">
    <property type="term" value="C:DNA polymerase III complex"/>
    <property type="evidence" value="ECO:0007669"/>
    <property type="project" value="InterPro"/>
</dbReference>
<dbReference type="GO" id="GO:0005634">
    <property type="term" value="C:nucleus"/>
    <property type="evidence" value="ECO:0007669"/>
    <property type="project" value="UniProtKB-SubCell"/>
</dbReference>
<dbReference type="GO" id="GO:0005886">
    <property type="term" value="C:plasma membrane"/>
    <property type="evidence" value="ECO:0007005"/>
    <property type="project" value="TAIR"/>
</dbReference>
<dbReference type="GO" id="GO:0005524">
    <property type="term" value="F:ATP binding"/>
    <property type="evidence" value="ECO:0007669"/>
    <property type="project" value="UniProtKB-KW"/>
</dbReference>
<dbReference type="GO" id="GO:0003677">
    <property type="term" value="F:DNA binding"/>
    <property type="evidence" value="ECO:0007669"/>
    <property type="project" value="InterPro"/>
</dbReference>
<dbReference type="GO" id="GO:0003887">
    <property type="term" value="F:DNA-directed DNA polymerase activity"/>
    <property type="evidence" value="ECO:0007669"/>
    <property type="project" value="InterPro"/>
</dbReference>
<dbReference type="GO" id="GO:0046872">
    <property type="term" value="F:metal ion binding"/>
    <property type="evidence" value="ECO:0007669"/>
    <property type="project" value="UniProtKB-KW"/>
</dbReference>
<dbReference type="GO" id="GO:0006260">
    <property type="term" value="P:DNA replication"/>
    <property type="evidence" value="ECO:0007669"/>
    <property type="project" value="InterPro"/>
</dbReference>
<dbReference type="GO" id="GO:0010091">
    <property type="term" value="P:trichome branching"/>
    <property type="evidence" value="ECO:0000315"/>
    <property type="project" value="UniProtKB"/>
</dbReference>
<dbReference type="GO" id="GO:0010026">
    <property type="term" value="P:trichome differentiation"/>
    <property type="evidence" value="ECO:0000315"/>
    <property type="project" value="TAIR"/>
</dbReference>
<dbReference type="CDD" id="cd00009">
    <property type="entry name" value="AAA"/>
    <property type="match status" value="1"/>
</dbReference>
<dbReference type="CDD" id="cd18137">
    <property type="entry name" value="HLD_clamp_pol_III_gamma_tau"/>
    <property type="match status" value="1"/>
</dbReference>
<dbReference type="FunFam" id="1.10.8.60:FF:000013">
    <property type="entry name" value="DNA polymerase III subunit gamma/tau"/>
    <property type="match status" value="1"/>
</dbReference>
<dbReference type="FunFam" id="3.40.50.300:FF:000014">
    <property type="entry name" value="DNA polymerase III subunit gamma/tau"/>
    <property type="match status" value="1"/>
</dbReference>
<dbReference type="Gene3D" id="1.10.8.60">
    <property type="match status" value="1"/>
</dbReference>
<dbReference type="Gene3D" id="1.20.272.10">
    <property type="match status" value="1"/>
</dbReference>
<dbReference type="Gene3D" id="3.40.50.300">
    <property type="entry name" value="P-loop containing nucleotide triphosphate hydrolases"/>
    <property type="match status" value="1"/>
</dbReference>
<dbReference type="InterPro" id="IPR008921">
    <property type="entry name" value="DNA_pol3_clamp-load_cplx_C"/>
</dbReference>
<dbReference type="InterPro" id="IPR022754">
    <property type="entry name" value="DNA_pol_III_gamma-3"/>
</dbReference>
<dbReference type="InterPro" id="IPR012763">
    <property type="entry name" value="DNA_pol_III_sug/sutau_N"/>
</dbReference>
<dbReference type="InterPro" id="IPR050238">
    <property type="entry name" value="DNA_Rep/Repair_Clamp_Loader"/>
</dbReference>
<dbReference type="InterPro" id="IPR054506">
    <property type="entry name" value="DnaA_N-like_STI"/>
</dbReference>
<dbReference type="InterPro" id="IPR045085">
    <property type="entry name" value="HLD_clamp_pol_III_gamma_tau"/>
</dbReference>
<dbReference type="InterPro" id="IPR027417">
    <property type="entry name" value="P-loop_NTPase"/>
</dbReference>
<dbReference type="NCBIfam" id="TIGR02397">
    <property type="entry name" value="dnaX_nterm"/>
    <property type="match status" value="1"/>
</dbReference>
<dbReference type="PANTHER" id="PTHR11669:SF63">
    <property type="entry name" value="PROTEIN STICHEL"/>
    <property type="match status" value="1"/>
</dbReference>
<dbReference type="PANTHER" id="PTHR11669">
    <property type="entry name" value="REPLICATION FACTOR C / DNA POLYMERASE III GAMMA-TAU SUBUNIT"/>
    <property type="match status" value="1"/>
</dbReference>
<dbReference type="Pfam" id="PF13177">
    <property type="entry name" value="DNA_pol3_delta2"/>
    <property type="match status" value="1"/>
</dbReference>
<dbReference type="Pfam" id="PF12169">
    <property type="entry name" value="DNA_pol3_gamma3"/>
    <property type="match status" value="1"/>
</dbReference>
<dbReference type="Pfam" id="PF23007">
    <property type="entry name" value="DnaA_N-like_STI"/>
    <property type="match status" value="1"/>
</dbReference>
<dbReference type="Pfam" id="PF22608">
    <property type="entry name" value="DNAX_ATPase_lid"/>
    <property type="match status" value="1"/>
</dbReference>
<dbReference type="SUPFAM" id="SSF52540">
    <property type="entry name" value="P-loop containing nucleoside triphosphate hydrolases"/>
    <property type="match status" value="1"/>
</dbReference>
<dbReference type="SUPFAM" id="SSF48019">
    <property type="entry name" value="post-AAA+ oligomerization domain-like"/>
    <property type="match status" value="1"/>
</dbReference>
<proteinExistence type="evidence at protein level"/>
<sequence>MSGSRVSDLSKLHLKKELTQIRKAGRVLRDPGTTSSWKSPLDSSRSVALLETPASRNGGSSSQFPIRGESSTNRRGKEKKVFLYNWKTQKSSSEKSGLAKNGKEEEEEEEDASSWTQASVNDDDDVSDARNGGDSYRREIQSASMGFRCRDTNLASQGVSKMRKSNVGSCKKKSKKKISSSRLDCLSKYQPRDDIVARNCNAGSDDTEEELSNSEDLRKVTGASPLLLKLKQKNWSRSSSRLLRANNRKEDSSCTYNSTPALSTSSYNMYAVRNPSTVGSWDGTTTSVNDGDDELDDNLDLPGRQGCGIPCYWTKKAMKHRGGCRSCCSPSFSDTLRRTGSSILCGSQSVYRRHNRHSSGGYSKQKIACRSAQGVLPLLSYGGDGRGGSSLGTGLSDDELSTNYGELDLEAQSRLDGRRWSTSYRSQDGLEAVALDGEEEEGSTPETIRSFSQKYRPMFFEELIGQSIVVQSLMNAVKRSRIAPVYLFQGPRGTGKTSTARIFSAALNCVATEEMKPCGYCKECNDFMSGKSKDFWELDGANKKGADKVRYLLKNLPTILPRNSSMYKVFVIDECHLLPSKTWLSFLKFLENPLQKVVFIFITTDLENVPRTIQSRCQKFLFDKLKDSDIVVRLKKIASDENLDVDLHALDLIAMNADGSLRDAETMLEQLSLLGKRITTALVNELVGVVSDEKLLELLELALSSDTAETVKRARELLDLGADPIVLMSQLASLIMDIIAGTYKVVDEKYSNAFFDGRNLTEADMEGLKHALKLLSEAEKQLRVSNDRSTWFTATLLQLGSMPSPGTTHTGSSRRQSSRATDDDPASVSREVMAYKQRIGGLHFSKSASPASVIKRNGNHSHEAKPFSRVIDNNCYKSSSSSQMIESEGSIASHENSIASTMMLNQRSSEKLNDIWRKCIERCHSKTLRQLLYTHGKLISISEVEGILVAYIAFGENDIKLRAERFLSSITNSIEMVLRRSVEVRIILLPETELLVVPHQTRKPEMTNKSGHLNNIAGLNAETDVEVGSSVESRSKLPMQRIESIIREQRLETAWLQTADKDTPGSIIRVKPERNQILPQEDTYRQTNVASAISSSGLTTHQWVDELNNEVKLLKIGDNGELQENLTGTRGQHCPLSPSLLHDTNFGNNKDNLGGYESGSGRVGCNILFCWNTKKTQRRSKSKQVKGTPVRSRRNRKSRFSLFNGCAKPRKAEGNIRR</sequence>
<gene>
    <name type="primary">STI</name>
    <name type="ordered locus">At2g02480</name>
    <name type="ORF">T8K22.22</name>
</gene>
<name>STI_ARATH</name>
<keyword id="KW-0067">ATP-binding</keyword>
<keyword id="KW-0175">Coiled coil</keyword>
<keyword id="KW-0479">Metal-binding</keyword>
<keyword id="KW-0547">Nucleotide-binding</keyword>
<keyword id="KW-0539">Nucleus</keyword>
<keyword id="KW-1185">Reference proteome</keyword>
<keyword id="KW-0677">Repeat</keyword>
<keyword id="KW-0862">Zinc</keyword>
<protein>
    <recommendedName>
        <fullName>Protein STICHEL</fullName>
    </recommendedName>
</protein>
<comment type="function">
    <text evidence="4 5 6 8 10">Acts as a key regulator of trichome branching through an endoreduplication-independent pathway.</text>
</comment>
<comment type="subunit">
    <text evidence="7">Interacts with BLT.</text>
</comment>
<comment type="subcellular location">
    <subcellularLocation>
        <location evidence="11">Nucleus</location>
    </subcellularLocation>
</comment>
<comment type="tissue specificity">
    <text evidence="5">Ubiquitous.</text>
</comment>
<comment type="induction">
    <text evidence="8">By gibberellin A3 (GA3).</text>
</comment>
<comment type="domain">
    <text>PEST motif is known to mediate rapid protein degradation.</text>
</comment>
<comment type="disruption phenotype">
    <text evidence="5 9">Shows trichomes with exclusively no branching.</text>
</comment>
<comment type="similarity">
    <text evidence="11">Belongs to the DnaX/STICHEL family.</text>
</comment>